<protein>
    <recommendedName>
        <fullName evidence="1">Tryptophan--tRNA ligase</fullName>
        <ecNumber evidence="1">6.1.1.2</ecNumber>
    </recommendedName>
    <alternativeName>
        <fullName evidence="1">Tryptophanyl-tRNA synthetase</fullName>
        <shortName evidence="1">TrpRS</shortName>
    </alternativeName>
</protein>
<proteinExistence type="inferred from homology"/>
<accession>P67592</accession>
<accession>Q99V94</accession>
<keyword id="KW-0030">Aminoacyl-tRNA synthetase</keyword>
<keyword id="KW-0067">ATP-binding</keyword>
<keyword id="KW-0963">Cytoplasm</keyword>
<keyword id="KW-0436">Ligase</keyword>
<keyword id="KW-0547">Nucleotide-binding</keyword>
<keyword id="KW-0648">Protein biosynthesis</keyword>
<organism>
    <name type="scientific">Staphylococcus aureus (strain Mu50 / ATCC 700699)</name>
    <dbReference type="NCBI Taxonomy" id="158878"/>
    <lineage>
        <taxon>Bacteria</taxon>
        <taxon>Bacillati</taxon>
        <taxon>Bacillota</taxon>
        <taxon>Bacilli</taxon>
        <taxon>Bacillales</taxon>
        <taxon>Staphylococcaceae</taxon>
        <taxon>Staphylococcus</taxon>
    </lineage>
</organism>
<feature type="chain" id="PRO_0000136676" description="Tryptophan--tRNA ligase">
    <location>
        <begin position="1"/>
        <end position="329"/>
    </location>
</feature>
<feature type="short sequence motif" description="'HIGH' region" evidence="1">
    <location>
        <begin position="10"/>
        <end position="18"/>
    </location>
</feature>
<feature type="short sequence motif" description="'KMSKS' region" evidence="1">
    <location>
        <begin position="193"/>
        <end position="197"/>
    </location>
</feature>
<feature type="binding site" evidence="1">
    <location>
        <begin position="9"/>
        <end position="11"/>
    </location>
    <ligand>
        <name>ATP</name>
        <dbReference type="ChEBI" id="CHEBI:30616"/>
    </ligand>
</feature>
<feature type="binding site" evidence="1">
    <location>
        <begin position="17"/>
        <end position="18"/>
    </location>
    <ligand>
        <name>ATP</name>
        <dbReference type="ChEBI" id="CHEBI:30616"/>
    </ligand>
</feature>
<feature type="binding site" evidence="1">
    <location>
        <position position="133"/>
    </location>
    <ligand>
        <name>L-tryptophan</name>
        <dbReference type="ChEBI" id="CHEBI:57912"/>
    </ligand>
</feature>
<feature type="binding site" evidence="1">
    <location>
        <begin position="145"/>
        <end position="147"/>
    </location>
    <ligand>
        <name>ATP</name>
        <dbReference type="ChEBI" id="CHEBI:30616"/>
    </ligand>
</feature>
<feature type="binding site" evidence="1">
    <location>
        <position position="184"/>
    </location>
    <ligand>
        <name>ATP</name>
        <dbReference type="ChEBI" id="CHEBI:30616"/>
    </ligand>
</feature>
<feature type="binding site" evidence="1">
    <location>
        <begin position="193"/>
        <end position="197"/>
    </location>
    <ligand>
        <name>ATP</name>
        <dbReference type="ChEBI" id="CHEBI:30616"/>
    </ligand>
</feature>
<evidence type="ECO:0000255" key="1">
    <source>
        <dbReference type="HAMAP-Rule" id="MF_00140"/>
    </source>
</evidence>
<reference key="1">
    <citation type="journal article" date="2001" name="Lancet">
        <title>Whole genome sequencing of meticillin-resistant Staphylococcus aureus.</title>
        <authorList>
            <person name="Kuroda M."/>
            <person name="Ohta T."/>
            <person name="Uchiyama I."/>
            <person name="Baba T."/>
            <person name="Yuzawa H."/>
            <person name="Kobayashi I."/>
            <person name="Cui L."/>
            <person name="Oguchi A."/>
            <person name="Aoki K."/>
            <person name="Nagai Y."/>
            <person name="Lian J.-Q."/>
            <person name="Ito T."/>
            <person name="Kanamori M."/>
            <person name="Matsumaru H."/>
            <person name="Maruyama A."/>
            <person name="Murakami H."/>
            <person name="Hosoyama A."/>
            <person name="Mizutani-Ui Y."/>
            <person name="Takahashi N.K."/>
            <person name="Sawano T."/>
            <person name="Inoue R."/>
            <person name="Kaito C."/>
            <person name="Sekimizu K."/>
            <person name="Hirakawa H."/>
            <person name="Kuhara S."/>
            <person name="Goto S."/>
            <person name="Yabuzaki J."/>
            <person name="Kanehisa M."/>
            <person name="Yamashita A."/>
            <person name="Oshima K."/>
            <person name="Furuya K."/>
            <person name="Yoshino C."/>
            <person name="Shiba T."/>
            <person name="Hattori M."/>
            <person name="Ogasawara N."/>
            <person name="Hayashi H."/>
            <person name="Hiramatsu K."/>
        </authorList>
    </citation>
    <scope>NUCLEOTIDE SEQUENCE [LARGE SCALE GENOMIC DNA]</scope>
    <source>
        <strain>Mu50 / ATCC 700699</strain>
    </source>
</reference>
<gene>
    <name evidence="1" type="primary">trpS</name>
    <name type="ordered locus">SAV0996</name>
</gene>
<name>SYW_STAAM</name>
<dbReference type="EC" id="6.1.1.2" evidence="1"/>
<dbReference type="EMBL" id="BA000017">
    <property type="protein sequence ID" value="BAB57158.1"/>
    <property type="molecule type" value="Genomic_DNA"/>
</dbReference>
<dbReference type="RefSeq" id="WP_000448934.1">
    <property type="nucleotide sequence ID" value="NC_002758.2"/>
</dbReference>
<dbReference type="SMR" id="P67592"/>
<dbReference type="KEGG" id="sav:SAV0996"/>
<dbReference type="HOGENOM" id="CLU_029244_1_1_9"/>
<dbReference type="PhylomeDB" id="P67592"/>
<dbReference type="Proteomes" id="UP000002481">
    <property type="component" value="Chromosome"/>
</dbReference>
<dbReference type="GO" id="GO:0005829">
    <property type="term" value="C:cytosol"/>
    <property type="evidence" value="ECO:0007669"/>
    <property type="project" value="TreeGrafter"/>
</dbReference>
<dbReference type="GO" id="GO:0005524">
    <property type="term" value="F:ATP binding"/>
    <property type="evidence" value="ECO:0007669"/>
    <property type="project" value="UniProtKB-UniRule"/>
</dbReference>
<dbReference type="GO" id="GO:0004830">
    <property type="term" value="F:tryptophan-tRNA ligase activity"/>
    <property type="evidence" value="ECO:0007669"/>
    <property type="project" value="UniProtKB-UniRule"/>
</dbReference>
<dbReference type="GO" id="GO:0006436">
    <property type="term" value="P:tryptophanyl-tRNA aminoacylation"/>
    <property type="evidence" value="ECO:0007669"/>
    <property type="project" value="UniProtKB-UniRule"/>
</dbReference>
<dbReference type="CDD" id="cd00806">
    <property type="entry name" value="TrpRS_core"/>
    <property type="match status" value="1"/>
</dbReference>
<dbReference type="FunFam" id="1.10.240.10:FF:000002">
    <property type="entry name" value="Tryptophan--tRNA ligase"/>
    <property type="match status" value="1"/>
</dbReference>
<dbReference type="Gene3D" id="3.40.50.620">
    <property type="entry name" value="HUPs"/>
    <property type="match status" value="1"/>
</dbReference>
<dbReference type="Gene3D" id="1.10.240.10">
    <property type="entry name" value="Tyrosyl-Transfer RNA Synthetase"/>
    <property type="match status" value="1"/>
</dbReference>
<dbReference type="HAMAP" id="MF_00140_B">
    <property type="entry name" value="Trp_tRNA_synth_B"/>
    <property type="match status" value="1"/>
</dbReference>
<dbReference type="InterPro" id="IPR001412">
    <property type="entry name" value="aa-tRNA-synth_I_CS"/>
</dbReference>
<dbReference type="InterPro" id="IPR002305">
    <property type="entry name" value="aa-tRNA-synth_Ic"/>
</dbReference>
<dbReference type="InterPro" id="IPR014729">
    <property type="entry name" value="Rossmann-like_a/b/a_fold"/>
</dbReference>
<dbReference type="InterPro" id="IPR002306">
    <property type="entry name" value="Trp-tRNA-ligase"/>
</dbReference>
<dbReference type="InterPro" id="IPR024109">
    <property type="entry name" value="Trp-tRNA-ligase_bac-type"/>
</dbReference>
<dbReference type="InterPro" id="IPR050203">
    <property type="entry name" value="Trp-tRNA_synthetase"/>
</dbReference>
<dbReference type="NCBIfam" id="TIGR00233">
    <property type="entry name" value="trpS"/>
    <property type="match status" value="1"/>
</dbReference>
<dbReference type="PANTHER" id="PTHR43766">
    <property type="entry name" value="TRYPTOPHAN--TRNA LIGASE, MITOCHONDRIAL"/>
    <property type="match status" value="1"/>
</dbReference>
<dbReference type="PANTHER" id="PTHR43766:SF1">
    <property type="entry name" value="TRYPTOPHAN--TRNA LIGASE, MITOCHONDRIAL"/>
    <property type="match status" value="1"/>
</dbReference>
<dbReference type="Pfam" id="PF00579">
    <property type="entry name" value="tRNA-synt_1b"/>
    <property type="match status" value="1"/>
</dbReference>
<dbReference type="PRINTS" id="PR01039">
    <property type="entry name" value="TRNASYNTHTRP"/>
</dbReference>
<dbReference type="SUPFAM" id="SSF52374">
    <property type="entry name" value="Nucleotidylyl transferase"/>
    <property type="match status" value="1"/>
</dbReference>
<dbReference type="PROSITE" id="PS00178">
    <property type="entry name" value="AA_TRNA_LIGASE_I"/>
    <property type="match status" value="1"/>
</dbReference>
<comment type="function">
    <text evidence="1">Catalyzes the attachment of tryptophan to tRNA(Trp).</text>
</comment>
<comment type="catalytic activity">
    <reaction evidence="1">
        <text>tRNA(Trp) + L-tryptophan + ATP = L-tryptophyl-tRNA(Trp) + AMP + diphosphate + H(+)</text>
        <dbReference type="Rhea" id="RHEA:24080"/>
        <dbReference type="Rhea" id="RHEA-COMP:9671"/>
        <dbReference type="Rhea" id="RHEA-COMP:9705"/>
        <dbReference type="ChEBI" id="CHEBI:15378"/>
        <dbReference type="ChEBI" id="CHEBI:30616"/>
        <dbReference type="ChEBI" id="CHEBI:33019"/>
        <dbReference type="ChEBI" id="CHEBI:57912"/>
        <dbReference type="ChEBI" id="CHEBI:78442"/>
        <dbReference type="ChEBI" id="CHEBI:78535"/>
        <dbReference type="ChEBI" id="CHEBI:456215"/>
        <dbReference type="EC" id="6.1.1.2"/>
    </reaction>
</comment>
<comment type="subunit">
    <text evidence="1">Homodimer.</text>
</comment>
<comment type="subcellular location">
    <subcellularLocation>
        <location evidence="1">Cytoplasm</location>
    </subcellularLocation>
</comment>
<comment type="similarity">
    <text evidence="1">Belongs to the class-I aminoacyl-tRNA synthetase family.</text>
</comment>
<sequence length="329" mass="36909">METLFSGIQPSGIPTIGNYIGALKQFVDVQNDYDCYFCIVDQHAITMPQDRLKLRKQTRQLAAIYLASGIDPDKATLFIQSEVPAHVQAGWMLTTIASVGELERMTQYKDKAQKAVEGIPAGLLTYPPLMAADIVLYNTNIVPVGDDQKQHIELTRNLVDRFNSRYNDVLVKPEIRMPKVGGRVMSLQDPTRKMSKSDDNAKNFISLLDEPNVAAKKIKSAVTDSDGIIKFDRDNKPGITNLISIYAGLTDMPIKDIEAKYEGEGYGKFKGDLAEIVKAFLVEFQEKYESFYNSDKLDDILDQGRDKAHKVSFKTVKKMEKAMGLGRKR</sequence>